<reference evidence="3" key="1">
    <citation type="journal article" date="2013" name="J. Ind. Microbiol. Biotechnol.">
        <title>Detection of secreted antimicrobial peptides isolated from cell-free culture supernatant of Paenibacillus alvei AN5.</title>
        <authorList>
            <person name="Alkotaini B."/>
            <person name="Anuar N."/>
            <person name="Kadhum A.A."/>
            <person name="Sani A.A."/>
        </authorList>
    </citation>
    <scope>PROTEIN SEQUENCE</scope>
    <scope>FUNCTION</scope>
    <scope>BIOPHYSICOCHEMICAL PROPERTIES</scope>
    <scope>MASS SPECTROMETRY</scope>
    <source>
        <strain evidence="1">AN5</strain>
    </source>
</reference>
<name>AMP1_PAEAL</name>
<comment type="function">
    <text evidence="1">Has bactericidal activity against E.coli ATCC 29522 and S.aureus. Inhibits growth of S.marcescens and B.cereus ATCC 14579. A synthetic peptide has antibacterial activity against E.coli ATCC 29522 (MIC=8 ug/ml), S.aureus (MIC=64 ug/ml), S.marcescens (MIC=32 ug/ml), B.cereus ATCC 14579 (MIC=64 ug/ml), B.subtilis (MIC=32 ug/ml), L.plantarum ATCC 8014 (MIC=32 ug/ml), B.flexus (MIC=32 ug/ml), S.enteritidis ATCC 13076 (MIC=4 ug/ml), Enterobacter spp (MIC=32 ug/ml), B.anthracis (MIC=128 ug/ml), B.licheniformis (MIC&gt;128 ug/ml) and L.lactis ATCC 11454 (MIC&gt;128 ug/ml).</text>
</comment>
<comment type="biophysicochemical properties">
    <phDependence>
        <text evidence="1">Active between pH 2 and 12.</text>
    </phDependence>
    <temperatureDependence>
        <text evidence="1">Active between 37 and 90 degrees Celsius. Activity is reduced at 100 degrees Celsius and absent at 110 degrees Celsius. Activity is unaffected by storage at -20 degrees Celsius.</text>
    </temperatureDependence>
</comment>
<comment type="mass spectrometry" mass="1316.734" method="Electrospray" evidence="1"/>
<comment type="miscellaneous">
    <text evidence="1">A synthetic peptide has no antibacterial activity against S.agalactiae ATCC 12386, S.epidermidis, P.aeruginosa and methicillin-resistant S.aureus (MRSA).</text>
</comment>
<keyword id="KW-0044">Antibiotic</keyword>
<keyword id="KW-0929">Antimicrobial</keyword>
<keyword id="KW-0903">Direct protein sequencing</keyword>
<organism>
    <name type="scientific">Paenibacillus alvei</name>
    <name type="common">Bacillus alvei</name>
    <dbReference type="NCBI Taxonomy" id="44250"/>
    <lineage>
        <taxon>Bacteria</taxon>
        <taxon>Bacillati</taxon>
        <taxon>Bacillota</taxon>
        <taxon>Bacilli</taxon>
        <taxon>Bacillales</taxon>
        <taxon>Paenibacillaceae</taxon>
        <taxon>Paenibacillus</taxon>
    </lineage>
</organism>
<feature type="peptide" id="PRO_0000419697" description="Antimicrobial protein AN5-1" evidence="1">
    <location>
        <begin position="1"/>
        <end position="12"/>
    </location>
</feature>
<proteinExistence type="evidence at protein level"/>
<dbReference type="GO" id="GO:0050829">
    <property type="term" value="P:defense response to Gram-negative bacterium"/>
    <property type="evidence" value="ECO:0000314"/>
    <property type="project" value="UniProtKB"/>
</dbReference>
<dbReference type="GO" id="GO:0050830">
    <property type="term" value="P:defense response to Gram-positive bacterium"/>
    <property type="evidence" value="ECO:0000314"/>
    <property type="project" value="UniProtKB"/>
</dbReference>
<evidence type="ECO:0000269" key="1">
    <source>
    </source>
</evidence>
<evidence type="ECO:0000303" key="2">
    <source>
    </source>
</evidence>
<evidence type="ECO:0000305" key="3"/>
<sequence length="12" mass="1318">YSKSLPLSVLNP</sequence>
<protein>
    <recommendedName>
        <fullName evidence="2">Antimicrobial protein AN5-1</fullName>
    </recommendedName>
</protein>
<accession>B3EWQ6</accession>